<organism>
    <name type="scientific">Coprothermobacter proteolyticus (strain ATCC 35245 / DSM 5265 / OCM 4 / BT)</name>
    <dbReference type="NCBI Taxonomy" id="309798"/>
    <lineage>
        <taxon>Bacteria</taxon>
        <taxon>Pseudomonadati</taxon>
        <taxon>Coprothermobacterota</taxon>
        <taxon>Coprothermobacteria</taxon>
        <taxon>Coprothermobacterales</taxon>
        <taxon>Coprothermobacteraceae</taxon>
        <taxon>Coprothermobacter</taxon>
    </lineage>
</organism>
<gene>
    <name evidence="1" type="primary">efp</name>
    <name type="ordered locus">COPRO5265_0774</name>
</gene>
<feature type="chain" id="PRO_1000117889" description="Elongation factor P">
    <location>
        <begin position="1"/>
        <end position="186"/>
    </location>
</feature>
<accession>B5Y8M4</accession>
<reference key="1">
    <citation type="submission" date="2008-08" db="EMBL/GenBank/DDBJ databases">
        <title>The complete genome sequence of Coprothermobacter proteolyticus strain ATCC 5245 / DSM 5265 / BT.</title>
        <authorList>
            <person name="Dodson R.J."/>
            <person name="Durkin A.S."/>
            <person name="Wu M."/>
            <person name="Eisen J."/>
            <person name="Sutton G."/>
        </authorList>
    </citation>
    <scope>NUCLEOTIDE SEQUENCE [LARGE SCALE GENOMIC DNA]</scope>
    <source>
        <strain>ATCC 35245 / DSM 5265 / OCM 4 / BT</strain>
    </source>
</reference>
<comment type="function">
    <text evidence="1">Involved in peptide bond synthesis. Stimulates efficient translation and peptide-bond synthesis on native or reconstituted 70S ribosomes in vitro. Probably functions indirectly by altering the affinity of the ribosome for aminoacyl-tRNA, thus increasing their reactivity as acceptors for peptidyl transferase.</text>
</comment>
<comment type="pathway">
    <text evidence="1">Protein biosynthesis; polypeptide chain elongation.</text>
</comment>
<comment type="subcellular location">
    <subcellularLocation>
        <location evidence="1">Cytoplasm</location>
    </subcellularLocation>
</comment>
<comment type="similarity">
    <text evidence="1">Belongs to the elongation factor P family.</text>
</comment>
<dbReference type="EMBL" id="CP001145">
    <property type="protein sequence ID" value="ACI17865.1"/>
    <property type="molecule type" value="Genomic_DNA"/>
</dbReference>
<dbReference type="RefSeq" id="WP_012544516.1">
    <property type="nucleotide sequence ID" value="NC_011295.1"/>
</dbReference>
<dbReference type="SMR" id="B5Y8M4"/>
<dbReference type="STRING" id="309798.COPRO5265_0774"/>
<dbReference type="KEGG" id="cpo:COPRO5265_0774"/>
<dbReference type="eggNOG" id="COG0231">
    <property type="taxonomic scope" value="Bacteria"/>
</dbReference>
<dbReference type="HOGENOM" id="CLU_074944_0_1_9"/>
<dbReference type="OrthoDB" id="9801844at2"/>
<dbReference type="UniPathway" id="UPA00345"/>
<dbReference type="Proteomes" id="UP000001732">
    <property type="component" value="Chromosome"/>
</dbReference>
<dbReference type="GO" id="GO:0005737">
    <property type="term" value="C:cytoplasm"/>
    <property type="evidence" value="ECO:0007669"/>
    <property type="project" value="UniProtKB-SubCell"/>
</dbReference>
<dbReference type="GO" id="GO:0003746">
    <property type="term" value="F:translation elongation factor activity"/>
    <property type="evidence" value="ECO:0007669"/>
    <property type="project" value="UniProtKB-UniRule"/>
</dbReference>
<dbReference type="GO" id="GO:0043043">
    <property type="term" value="P:peptide biosynthetic process"/>
    <property type="evidence" value="ECO:0007669"/>
    <property type="project" value="InterPro"/>
</dbReference>
<dbReference type="CDD" id="cd04470">
    <property type="entry name" value="S1_EF-P_repeat_1"/>
    <property type="match status" value="1"/>
</dbReference>
<dbReference type="CDD" id="cd05794">
    <property type="entry name" value="S1_EF-P_repeat_2"/>
    <property type="match status" value="1"/>
</dbReference>
<dbReference type="FunFam" id="2.30.30.30:FF:000003">
    <property type="entry name" value="Elongation factor P"/>
    <property type="match status" value="1"/>
</dbReference>
<dbReference type="FunFam" id="2.40.50.140:FF:000004">
    <property type="entry name" value="Elongation factor P"/>
    <property type="match status" value="1"/>
</dbReference>
<dbReference type="FunFam" id="2.40.50.140:FF:000009">
    <property type="entry name" value="Elongation factor P"/>
    <property type="match status" value="1"/>
</dbReference>
<dbReference type="Gene3D" id="2.30.30.30">
    <property type="match status" value="1"/>
</dbReference>
<dbReference type="Gene3D" id="2.40.50.140">
    <property type="entry name" value="Nucleic acid-binding proteins"/>
    <property type="match status" value="2"/>
</dbReference>
<dbReference type="HAMAP" id="MF_00141">
    <property type="entry name" value="EF_P"/>
    <property type="match status" value="1"/>
</dbReference>
<dbReference type="InterPro" id="IPR015365">
    <property type="entry name" value="Elong-fact-P_C"/>
</dbReference>
<dbReference type="InterPro" id="IPR012340">
    <property type="entry name" value="NA-bd_OB-fold"/>
</dbReference>
<dbReference type="InterPro" id="IPR014722">
    <property type="entry name" value="Rib_uL2_dom2"/>
</dbReference>
<dbReference type="InterPro" id="IPR020599">
    <property type="entry name" value="Transl_elong_fac_P/YeiP"/>
</dbReference>
<dbReference type="InterPro" id="IPR013185">
    <property type="entry name" value="Transl_elong_KOW-like"/>
</dbReference>
<dbReference type="InterPro" id="IPR001059">
    <property type="entry name" value="Transl_elong_P/YeiP_cen"/>
</dbReference>
<dbReference type="InterPro" id="IPR013852">
    <property type="entry name" value="Transl_elong_P/YeiP_CS"/>
</dbReference>
<dbReference type="InterPro" id="IPR011768">
    <property type="entry name" value="Transl_elongation_fac_P"/>
</dbReference>
<dbReference type="InterPro" id="IPR008991">
    <property type="entry name" value="Translation_prot_SH3-like_sf"/>
</dbReference>
<dbReference type="NCBIfam" id="TIGR00038">
    <property type="entry name" value="efp"/>
    <property type="match status" value="1"/>
</dbReference>
<dbReference type="NCBIfam" id="NF001810">
    <property type="entry name" value="PRK00529.1"/>
    <property type="match status" value="1"/>
</dbReference>
<dbReference type="PANTHER" id="PTHR30053">
    <property type="entry name" value="ELONGATION FACTOR P"/>
    <property type="match status" value="1"/>
</dbReference>
<dbReference type="PANTHER" id="PTHR30053:SF12">
    <property type="entry name" value="ELONGATION FACTOR P (EF-P) FAMILY PROTEIN"/>
    <property type="match status" value="1"/>
</dbReference>
<dbReference type="Pfam" id="PF01132">
    <property type="entry name" value="EFP"/>
    <property type="match status" value="1"/>
</dbReference>
<dbReference type="Pfam" id="PF08207">
    <property type="entry name" value="EFP_N"/>
    <property type="match status" value="1"/>
</dbReference>
<dbReference type="Pfam" id="PF09285">
    <property type="entry name" value="Elong-fact-P_C"/>
    <property type="match status" value="1"/>
</dbReference>
<dbReference type="PIRSF" id="PIRSF005901">
    <property type="entry name" value="EF-P"/>
    <property type="match status" value="1"/>
</dbReference>
<dbReference type="SMART" id="SM01185">
    <property type="entry name" value="EFP"/>
    <property type="match status" value="1"/>
</dbReference>
<dbReference type="SMART" id="SM00841">
    <property type="entry name" value="Elong-fact-P_C"/>
    <property type="match status" value="1"/>
</dbReference>
<dbReference type="SUPFAM" id="SSF50249">
    <property type="entry name" value="Nucleic acid-binding proteins"/>
    <property type="match status" value="2"/>
</dbReference>
<dbReference type="SUPFAM" id="SSF50104">
    <property type="entry name" value="Translation proteins SH3-like domain"/>
    <property type="match status" value="1"/>
</dbReference>
<dbReference type="PROSITE" id="PS01275">
    <property type="entry name" value="EFP"/>
    <property type="match status" value="1"/>
</dbReference>
<proteinExistence type="inferred from homology"/>
<name>EFP_COPPD</name>
<evidence type="ECO:0000255" key="1">
    <source>
        <dbReference type="HAMAP-Rule" id="MF_00141"/>
    </source>
</evidence>
<protein>
    <recommendedName>
        <fullName evidence="1">Elongation factor P</fullName>
        <shortName evidence="1">EF-P</shortName>
    </recommendedName>
</protein>
<sequence>MISTNDLRPGIIVDLDGTLYLIVTAQHVKPGKGSAFVRVKMKKLSDGSTIEQTFRAGEKVQRAYLETKQMQYLYSDGEHFVFMDTDTYEQVTLSGDIMSDVQQWLKEGMMVNVQFYQGKAVGIEVPTFVELEVVETEPGVRGDTAQGGSKPAKLETGAVVQVPLFITEGDIIRVDTRTGEYVERVG</sequence>
<keyword id="KW-0963">Cytoplasm</keyword>
<keyword id="KW-0251">Elongation factor</keyword>
<keyword id="KW-0648">Protein biosynthesis</keyword>
<keyword id="KW-1185">Reference proteome</keyword>